<proteinExistence type="evidence at protein level"/>
<protein>
    <recommendedName>
        <fullName>AN1-type zinc finger protein 6</fullName>
    </recommendedName>
    <alternativeName>
        <fullName>Zinc finger A20 domain-containing protein 3</fullName>
    </alternativeName>
</protein>
<accession>Q6DGF4</accession>
<evidence type="ECO:0000250" key="1"/>
<evidence type="ECO:0000250" key="2">
    <source>
        <dbReference type="UniProtKB" id="Q6FIF0"/>
    </source>
</evidence>
<evidence type="ECO:0000250" key="3">
    <source>
        <dbReference type="UniProtKB" id="Q9DCH6"/>
    </source>
</evidence>
<evidence type="ECO:0000255" key="4">
    <source>
        <dbReference type="PROSITE-ProRule" id="PRU00449"/>
    </source>
</evidence>
<evidence type="ECO:0000255" key="5">
    <source>
        <dbReference type="PROSITE-ProRule" id="PRU00451"/>
    </source>
</evidence>
<evidence type="ECO:0000256" key="6">
    <source>
        <dbReference type="SAM" id="MobiDB-lite"/>
    </source>
</evidence>
<evidence type="ECO:0000269" key="7">
    <source>
    </source>
</evidence>
<name>ZFAN6_RAT</name>
<comment type="function">
    <text evidence="1">Involved in regulation of TNF-alpha induced NF-kappa-B activation and apoptosis. Involved in modulation of 'Lys-48'-linked polyubiquitination status of TRAF2 and decreases association of TRAF2 with RIPK1. Required for PTS1 target sequence-dependent protein import into peroxisomes and PEX5 stability; may cooperate with PEX6. In vitro involved in PEX5 export from the cytosol to peroxisomes (By similarity).</text>
</comment>
<comment type="subunit">
    <text evidence="1">Interacts with PKN1. Interacts with TRAF2. Interacts with mono- and polyubiquitin. Interacts with PEX6. Interacts with PEX5 (Cys-linked ubiquitinated) (By similarity).</text>
</comment>
<comment type="subcellular location">
    <subcellularLocation>
        <location evidence="7">Cytoplasm</location>
    </subcellularLocation>
</comment>
<comment type="domain">
    <text evidence="1">The A20-type zinc finger domain mediates regulation of NF-kappa-B activity.</text>
</comment>
<comment type="domain">
    <text evidence="1">The AN1-type zinc finger domain mediates association with TRAF2.</text>
</comment>
<feature type="chain" id="PRO_0000245238" description="AN1-type zinc finger protein 6">
    <location>
        <begin position="1"/>
        <end position="223"/>
    </location>
</feature>
<feature type="zinc finger region" description="A20-type" evidence="5">
    <location>
        <begin position="8"/>
        <end position="42"/>
    </location>
</feature>
<feature type="zinc finger region" description="AN1-type" evidence="4">
    <location>
        <begin position="158"/>
        <end position="204"/>
    </location>
</feature>
<feature type="region of interest" description="Disordered" evidence="6">
    <location>
        <begin position="41"/>
        <end position="155"/>
    </location>
</feature>
<feature type="compositionally biased region" description="Polar residues" evidence="6">
    <location>
        <begin position="77"/>
        <end position="110"/>
    </location>
</feature>
<feature type="compositionally biased region" description="Polar residues" evidence="6">
    <location>
        <begin position="137"/>
        <end position="148"/>
    </location>
</feature>
<feature type="binding site" evidence="5">
    <location>
        <position position="14"/>
    </location>
    <ligand>
        <name>Zn(2+)</name>
        <dbReference type="ChEBI" id="CHEBI:29105"/>
        <label>1</label>
    </ligand>
</feature>
<feature type="binding site" evidence="5">
    <location>
        <position position="18"/>
    </location>
    <ligand>
        <name>Zn(2+)</name>
        <dbReference type="ChEBI" id="CHEBI:29105"/>
        <label>1</label>
    </ligand>
</feature>
<feature type="binding site" evidence="5">
    <location>
        <position position="30"/>
    </location>
    <ligand>
        <name>Zn(2+)</name>
        <dbReference type="ChEBI" id="CHEBI:29105"/>
        <label>1</label>
    </ligand>
</feature>
<feature type="binding site" evidence="5">
    <location>
        <position position="33"/>
    </location>
    <ligand>
        <name>Zn(2+)</name>
        <dbReference type="ChEBI" id="CHEBI:29105"/>
        <label>1</label>
    </ligand>
</feature>
<feature type="binding site" evidence="4">
    <location>
        <position position="164"/>
    </location>
    <ligand>
        <name>Zn(2+)</name>
        <dbReference type="ChEBI" id="CHEBI:29105"/>
        <label>2</label>
    </ligand>
</feature>
<feature type="binding site" evidence="4">
    <location>
        <position position="167"/>
    </location>
    <ligand>
        <name>Zn(2+)</name>
        <dbReference type="ChEBI" id="CHEBI:29105"/>
        <label>2</label>
    </ligand>
</feature>
<feature type="binding site" evidence="4">
    <location>
        <position position="178"/>
    </location>
    <ligand>
        <name>Zn(2+)</name>
        <dbReference type="ChEBI" id="CHEBI:29105"/>
        <label>3</label>
    </ligand>
</feature>
<feature type="binding site" evidence="4">
    <location>
        <position position="180"/>
    </location>
    <ligand>
        <name>Zn(2+)</name>
        <dbReference type="ChEBI" id="CHEBI:29105"/>
        <label>3</label>
    </ligand>
</feature>
<feature type="binding site" evidence="4">
    <location>
        <position position="185"/>
    </location>
    <ligand>
        <name>Zn(2+)</name>
        <dbReference type="ChEBI" id="CHEBI:29105"/>
        <label>2</label>
    </ligand>
</feature>
<feature type="binding site" evidence="4">
    <location>
        <position position="188"/>
    </location>
    <ligand>
        <name>Zn(2+)</name>
        <dbReference type="ChEBI" id="CHEBI:29105"/>
        <label>2</label>
    </ligand>
</feature>
<feature type="binding site" evidence="4">
    <location>
        <position position="194"/>
    </location>
    <ligand>
        <name>Zn(2+)</name>
        <dbReference type="ChEBI" id="CHEBI:29105"/>
        <label>3</label>
    </ligand>
</feature>
<feature type="binding site" evidence="4">
    <location>
        <position position="196"/>
    </location>
    <ligand>
        <name>Zn(2+)</name>
        <dbReference type="ChEBI" id="CHEBI:29105"/>
        <label>3</label>
    </ligand>
</feature>
<feature type="modified residue" description="Phosphoserine" evidence="2">
    <location>
        <position position="49"/>
    </location>
</feature>
<feature type="modified residue" description="N6-acetyllysine" evidence="3">
    <location>
        <position position="219"/>
    </location>
</feature>
<dbReference type="EMBL" id="BC076394">
    <property type="protein sequence ID" value="AAH76394.1"/>
    <property type="molecule type" value="mRNA"/>
</dbReference>
<dbReference type="RefSeq" id="NP_001007631.1">
    <property type="nucleotide sequence ID" value="NM_001007630.1"/>
</dbReference>
<dbReference type="RefSeq" id="XP_006229561.1">
    <property type="nucleotide sequence ID" value="XM_006229499.4"/>
</dbReference>
<dbReference type="RefSeq" id="XP_006229562.1">
    <property type="nucleotide sequence ID" value="XM_006229500.5"/>
</dbReference>
<dbReference type="RefSeq" id="XP_006229564.1">
    <property type="nucleotide sequence ID" value="XM_006229502.5"/>
</dbReference>
<dbReference type="RefSeq" id="XP_006229566.1">
    <property type="nucleotide sequence ID" value="XM_006229504.4"/>
</dbReference>
<dbReference type="RefSeq" id="XP_017444432.1">
    <property type="nucleotide sequence ID" value="XM_017588943.3"/>
</dbReference>
<dbReference type="RefSeq" id="XP_038961673.1">
    <property type="nucleotide sequence ID" value="XM_039105745.2"/>
</dbReference>
<dbReference type="RefSeq" id="XP_038961678.1">
    <property type="nucleotide sequence ID" value="XM_039105750.2"/>
</dbReference>
<dbReference type="RefSeq" id="XP_063140879.1">
    <property type="nucleotide sequence ID" value="XM_063284809.1"/>
</dbReference>
<dbReference type="SMR" id="Q6DGF4"/>
<dbReference type="FunCoup" id="Q6DGF4">
    <property type="interactions" value="2980"/>
</dbReference>
<dbReference type="STRING" id="10116.ENSRNOP00000018098"/>
<dbReference type="iPTMnet" id="Q6DGF4"/>
<dbReference type="PhosphoSitePlus" id="Q6DGF4"/>
<dbReference type="PaxDb" id="10116-ENSRNOP00000018098"/>
<dbReference type="Ensembl" id="ENSRNOT00000018098.6">
    <property type="protein sequence ID" value="ENSRNOP00000018098.4"/>
    <property type="gene ID" value="ENSRNOG00000013506.6"/>
</dbReference>
<dbReference type="GeneID" id="293067"/>
<dbReference type="KEGG" id="rno:293067"/>
<dbReference type="UCSC" id="RGD:1359317">
    <property type="organism name" value="rat"/>
</dbReference>
<dbReference type="AGR" id="RGD:1359317"/>
<dbReference type="CTD" id="54469"/>
<dbReference type="RGD" id="1359317">
    <property type="gene designation" value="Zfand6"/>
</dbReference>
<dbReference type="eggNOG" id="KOG3173">
    <property type="taxonomic scope" value="Eukaryota"/>
</dbReference>
<dbReference type="GeneTree" id="ENSGT00940000160833"/>
<dbReference type="HOGENOM" id="CLU_057016_1_0_1"/>
<dbReference type="InParanoid" id="Q6DGF4"/>
<dbReference type="OMA" id="YCAMHRY"/>
<dbReference type="OrthoDB" id="428577at2759"/>
<dbReference type="PhylomeDB" id="Q6DGF4"/>
<dbReference type="TreeFam" id="TF313612"/>
<dbReference type="Reactome" id="R-RNO-9033241">
    <property type="pathway name" value="Peroxisomal protein import"/>
</dbReference>
<dbReference type="PRO" id="PR:Q6DGF4"/>
<dbReference type="Proteomes" id="UP000002494">
    <property type="component" value="Chromosome 1"/>
</dbReference>
<dbReference type="Bgee" id="ENSRNOG00000013506">
    <property type="expression patterns" value="Expressed in esophagus and 20 other cell types or tissues"/>
</dbReference>
<dbReference type="GO" id="GO:0005737">
    <property type="term" value="C:cytoplasm"/>
    <property type="evidence" value="ECO:0007669"/>
    <property type="project" value="UniProtKB-SubCell"/>
</dbReference>
<dbReference type="GO" id="GO:0003677">
    <property type="term" value="F:DNA binding"/>
    <property type="evidence" value="ECO:0007669"/>
    <property type="project" value="InterPro"/>
</dbReference>
<dbReference type="GO" id="GO:0031593">
    <property type="term" value="F:polyubiquitin modification-dependent protein binding"/>
    <property type="evidence" value="ECO:0000250"/>
    <property type="project" value="UniProtKB"/>
</dbReference>
<dbReference type="GO" id="GO:0008270">
    <property type="term" value="F:zinc ion binding"/>
    <property type="evidence" value="ECO:0007669"/>
    <property type="project" value="UniProtKB-KW"/>
</dbReference>
<dbReference type="GO" id="GO:0006915">
    <property type="term" value="P:apoptotic process"/>
    <property type="evidence" value="ECO:0007669"/>
    <property type="project" value="UniProtKB-KW"/>
</dbReference>
<dbReference type="GO" id="GO:0071356">
    <property type="term" value="P:cellular response to tumor necrosis factor"/>
    <property type="evidence" value="ECO:0000250"/>
    <property type="project" value="UniProtKB"/>
</dbReference>
<dbReference type="GO" id="GO:0043066">
    <property type="term" value="P:negative regulation of apoptotic process"/>
    <property type="evidence" value="ECO:0000250"/>
    <property type="project" value="UniProtKB"/>
</dbReference>
<dbReference type="GO" id="GO:0006625">
    <property type="term" value="P:protein targeting to peroxisome"/>
    <property type="evidence" value="ECO:0000250"/>
    <property type="project" value="UniProtKB"/>
</dbReference>
<dbReference type="GO" id="GO:0015031">
    <property type="term" value="P:protein transport"/>
    <property type="evidence" value="ECO:0007669"/>
    <property type="project" value="UniProtKB-KW"/>
</dbReference>
<dbReference type="GO" id="GO:0043122">
    <property type="term" value="P:regulation of canonical NF-kappaB signal transduction"/>
    <property type="evidence" value="ECO:0000250"/>
    <property type="project" value="UniProtKB"/>
</dbReference>
<dbReference type="GO" id="GO:0007165">
    <property type="term" value="P:signal transduction"/>
    <property type="evidence" value="ECO:0000266"/>
    <property type="project" value="RGD"/>
</dbReference>
<dbReference type="FunFam" id="1.20.5.4770:FF:000001">
    <property type="entry name" value="Zinc finger AN1-type containing 6"/>
    <property type="match status" value="1"/>
</dbReference>
<dbReference type="FunFam" id="4.10.1110.10:FF:000001">
    <property type="entry name" value="Zinc finger AN1-type containing 6"/>
    <property type="match status" value="1"/>
</dbReference>
<dbReference type="Gene3D" id="1.20.5.4770">
    <property type="match status" value="1"/>
</dbReference>
<dbReference type="Gene3D" id="4.10.1110.10">
    <property type="entry name" value="AN1-like Zinc finger"/>
    <property type="match status" value="1"/>
</dbReference>
<dbReference type="InterPro" id="IPR035896">
    <property type="entry name" value="AN1-like_Znf"/>
</dbReference>
<dbReference type="InterPro" id="IPR050652">
    <property type="entry name" value="AN1_A20_ZnFinger"/>
</dbReference>
<dbReference type="InterPro" id="IPR002653">
    <property type="entry name" value="Znf_A20"/>
</dbReference>
<dbReference type="InterPro" id="IPR000058">
    <property type="entry name" value="Znf_AN1"/>
</dbReference>
<dbReference type="PANTHER" id="PTHR10634">
    <property type="entry name" value="AN1-TYPE ZINC FINGER PROTEIN"/>
    <property type="match status" value="1"/>
</dbReference>
<dbReference type="PANTHER" id="PTHR10634:SF25">
    <property type="entry name" value="AN1-TYPE ZINC FINGER PROTEIN 6"/>
    <property type="match status" value="1"/>
</dbReference>
<dbReference type="Pfam" id="PF01754">
    <property type="entry name" value="zf-A20"/>
    <property type="match status" value="1"/>
</dbReference>
<dbReference type="Pfam" id="PF01428">
    <property type="entry name" value="zf-AN1"/>
    <property type="match status" value="1"/>
</dbReference>
<dbReference type="SMART" id="SM00259">
    <property type="entry name" value="ZnF_A20"/>
    <property type="match status" value="1"/>
</dbReference>
<dbReference type="SMART" id="SM00154">
    <property type="entry name" value="ZnF_AN1"/>
    <property type="match status" value="1"/>
</dbReference>
<dbReference type="SUPFAM" id="SSF118310">
    <property type="entry name" value="AN1-like Zinc finger"/>
    <property type="match status" value="1"/>
</dbReference>
<dbReference type="SUPFAM" id="SSF57716">
    <property type="entry name" value="Glucocorticoid receptor-like (DNA-binding domain)"/>
    <property type="match status" value="1"/>
</dbReference>
<dbReference type="PROSITE" id="PS51036">
    <property type="entry name" value="ZF_A20"/>
    <property type="match status" value="1"/>
</dbReference>
<dbReference type="PROSITE" id="PS51039">
    <property type="entry name" value="ZF_AN1"/>
    <property type="match status" value="1"/>
</dbReference>
<sequence length="223" mass="24001">MAQETNHSQAPMLCSTGCGFYGNPRTNGMCSVCYKEHLQRQNSSNGRISPPAASVSSLSESLPVQCADGSVPDAQSALDSTSSSMQPGPVSNQSLLSESVAPSQVDSTSVDKAVSETEDLQGPRAEGLVPLECDPPSSVSDTTQQPSEEQSKSLEKPKQKKNRCFMCRKKVGLTGFECRCGNVYCGVHRYSDVHNCSYNYKADAAEKIRKENPVVVGEKIQKI</sequence>
<keyword id="KW-0007">Acetylation</keyword>
<keyword id="KW-0053">Apoptosis</keyword>
<keyword id="KW-0963">Cytoplasm</keyword>
<keyword id="KW-0903">Direct protein sequencing</keyword>
<keyword id="KW-0479">Metal-binding</keyword>
<keyword id="KW-0597">Phosphoprotein</keyword>
<keyword id="KW-0653">Protein transport</keyword>
<keyword id="KW-1185">Reference proteome</keyword>
<keyword id="KW-0813">Transport</keyword>
<keyword id="KW-0862">Zinc</keyword>
<keyword id="KW-0863">Zinc-finger</keyword>
<gene>
    <name type="primary">Zfand6</name>
    <name type="synonym">Za20d3</name>
</gene>
<organism>
    <name type="scientific">Rattus norvegicus</name>
    <name type="common">Rat</name>
    <dbReference type="NCBI Taxonomy" id="10116"/>
    <lineage>
        <taxon>Eukaryota</taxon>
        <taxon>Metazoa</taxon>
        <taxon>Chordata</taxon>
        <taxon>Craniata</taxon>
        <taxon>Vertebrata</taxon>
        <taxon>Euteleostomi</taxon>
        <taxon>Mammalia</taxon>
        <taxon>Eutheria</taxon>
        <taxon>Euarchontoglires</taxon>
        <taxon>Glires</taxon>
        <taxon>Rodentia</taxon>
        <taxon>Myomorpha</taxon>
        <taxon>Muroidea</taxon>
        <taxon>Muridae</taxon>
        <taxon>Murinae</taxon>
        <taxon>Rattus</taxon>
    </lineage>
</organism>
<reference key="1">
    <citation type="journal article" date="2004" name="Genome Res.">
        <title>The status, quality, and expansion of the NIH full-length cDNA project: the Mammalian Gene Collection (MGC).</title>
        <authorList>
            <consortium name="The MGC Project Team"/>
        </authorList>
    </citation>
    <scope>NUCLEOTIDE SEQUENCE [LARGE SCALE MRNA]</scope>
    <source>
        <tissue>Kidney</tissue>
    </source>
</reference>
<reference key="2">
    <citation type="journal article" date="2012" name="Traffic">
        <title>AWP1/ZFAND6 functions in Pex5 export by interacting with cys-monoubiquitinated Pex5 and Pex6 AAA ATPase.</title>
        <authorList>
            <person name="Miyata N."/>
            <person name="Okumoto K."/>
            <person name="Mukai S."/>
            <person name="Noguchi M."/>
            <person name="Fujiki Y."/>
        </authorList>
    </citation>
    <scope>PROTEIN SEQUENCE OF 26-40; 153-158; 181-201 AND 212-219</scope>
    <scope>SUBCELLULAR LOCATION</scope>
</reference>